<geneLocation type="chloroplast"/>
<gene>
    <name evidence="2" type="primary">petA</name>
</gene>
<feature type="signal peptide" evidence="2">
    <location>
        <begin position="1"/>
        <end position="35"/>
    </location>
</feature>
<feature type="chain" id="PRO_0000023807" description="Cytochrome f">
    <location>
        <begin position="36"/>
        <end position="320"/>
    </location>
</feature>
<feature type="transmembrane region" description="Helical" evidence="2">
    <location>
        <begin position="286"/>
        <end position="306"/>
    </location>
</feature>
<feature type="binding site" description="axial binding residue" evidence="2">
    <location>
        <position position="36"/>
    </location>
    <ligand>
        <name>heme</name>
        <dbReference type="ChEBI" id="CHEBI:30413"/>
    </ligand>
    <ligandPart>
        <name>Fe</name>
        <dbReference type="ChEBI" id="CHEBI:18248"/>
    </ligandPart>
</feature>
<feature type="binding site" description="covalent" evidence="2">
    <location>
        <position position="56"/>
    </location>
    <ligand>
        <name>heme</name>
        <dbReference type="ChEBI" id="CHEBI:30413"/>
    </ligand>
</feature>
<feature type="binding site" description="covalent" evidence="2">
    <location>
        <position position="59"/>
    </location>
    <ligand>
        <name>heme</name>
        <dbReference type="ChEBI" id="CHEBI:30413"/>
    </ligand>
</feature>
<feature type="binding site" description="axial binding residue" evidence="2">
    <location>
        <position position="60"/>
    </location>
    <ligand>
        <name>heme</name>
        <dbReference type="ChEBI" id="CHEBI:30413"/>
    </ligand>
    <ligandPart>
        <name>Fe</name>
        <dbReference type="ChEBI" id="CHEBI:18248"/>
    </ligandPart>
</feature>
<accession>Q7YJW0</accession>
<name>CYF_CALFG</name>
<dbReference type="EMBL" id="AJ428413">
    <property type="protein sequence ID" value="CAD28734.1"/>
    <property type="molecule type" value="Genomic_DNA"/>
</dbReference>
<dbReference type="RefSeq" id="NP_862767.1">
    <property type="nucleotide sequence ID" value="NC_004993.1"/>
</dbReference>
<dbReference type="SMR" id="Q7YJW0"/>
<dbReference type="GeneID" id="2597995"/>
<dbReference type="GO" id="GO:0009535">
    <property type="term" value="C:chloroplast thylakoid membrane"/>
    <property type="evidence" value="ECO:0007669"/>
    <property type="project" value="UniProtKB-SubCell"/>
</dbReference>
<dbReference type="GO" id="GO:0009055">
    <property type="term" value="F:electron transfer activity"/>
    <property type="evidence" value="ECO:0007669"/>
    <property type="project" value="UniProtKB-UniRule"/>
</dbReference>
<dbReference type="GO" id="GO:0020037">
    <property type="term" value="F:heme binding"/>
    <property type="evidence" value="ECO:0007669"/>
    <property type="project" value="InterPro"/>
</dbReference>
<dbReference type="GO" id="GO:0005506">
    <property type="term" value="F:iron ion binding"/>
    <property type="evidence" value="ECO:0007669"/>
    <property type="project" value="InterPro"/>
</dbReference>
<dbReference type="GO" id="GO:0015979">
    <property type="term" value="P:photosynthesis"/>
    <property type="evidence" value="ECO:0007669"/>
    <property type="project" value="UniProtKB-UniRule"/>
</dbReference>
<dbReference type="FunFam" id="1.20.5.700:FF:000001">
    <property type="entry name" value="Cytochrome f"/>
    <property type="match status" value="1"/>
</dbReference>
<dbReference type="FunFam" id="2.40.50.100:FF:000007">
    <property type="entry name" value="Cytochrome f"/>
    <property type="match status" value="1"/>
</dbReference>
<dbReference type="FunFam" id="2.60.40.830:FF:000001">
    <property type="entry name" value="Cytochrome f"/>
    <property type="match status" value="1"/>
</dbReference>
<dbReference type="Gene3D" id="2.40.50.100">
    <property type="match status" value="1"/>
</dbReference>
<dbReference type="Gene3D" id="2.60.40.830">
    <property type="entry name" value="Cytochrome f large domain"/>
    <property type="match status" value="1"/>
</dbReference>
<dbReference type="Gene3D" id="1.20.5.700">
    <property type="entry name" value="Single helix bin"/>
    <property type="match status" value="1"/>
</dbReference>
<dbReference type="HAMAP" id="MF_00610">
    <property type="entry name" value="Cytb6_f_cytF"/>
    <property type="match status" value="1"/>
</dbReference>
<dbReference type="InterPro" id="IPR024058">
    <property type="entry name" value="Cyt-f_TM"/>
</dbReference>
<dbReference type="InterPro" id="IPR002325">
    <property type="entry name" value="Cyt_f"/>
</dbReference>
<dbReference type="InterPro" id="IPR024094">
    <property type="entry name" value="Cyt_f_lg_dom"/>
</dbReference>
<dbReference type="InterPro" id="IPR036826">
    <property type="entry name" value="Cyt_f_lg_dom_sf"/>
</dbReference>
<dbReference type="InterPro" id="IPR011054">
    <property type="entry name" value="Rudment_hybrid_motif"/>
</dbReference>
<dbReference type="PANTHER" id="PTHR33288">
    <property type="match status" value="1"/>
</dbReference>
<dbReference type="PANTHER" id="PTHR33288:SF10">
    <property type="entry name" value="CYTOCHROME F"/>
    <property type="match status" value="1"/>
</dbReference>
<dbReference type="Pfam" id="PF01333">
    <property type="entry name" value="Apocytochr_F_C"/>
    <property type="match status" value="1"/>
</dbReference>
<dbReference type="Pfam" id="PF16639">
    <property type="entry name" value="Apocytochr_F_N"/>
    <property type="match status" value="1"/>
</dbReference>
<dbReference type="PRINTS" id="PR00610">
    <property type="entry name" value="CYTOCHROMEF"/>
</dbReference>
<dbReference type="SUPFAM" id="SSF103431">
    <property type="entry name" value="Cytochrome f subunit of the cytochrome b6f complex, transmembrane anchor"/>
    <property type="match status" value="1"/>
</dbReference>
<dbReference type="SUPFAM" id="SSF49441">
    <property type="entry name" value="Cytochrome f, large domain"/>
    <property type="match status" value="1"/>
</dbReference>
<dbReference type="SUPFAM" id="SSF51246">
    <property type="entry name" value="Rudiment single hybrid motif"/>
    <property type="match status" value="1"/>
</dbReference>
<dbReference type="PROSITE" id="PS51010">
    <property type="entry name" value="CYTF"/>
    <property type="match status" value="1"/>
</dbReference>
<comment type="function">
    <text evidence="2">Component of the cytochrome b6-f complex, which mediates electron transfer between photosystem II (PSII) and photosystem I (PSI), cyclic electron flow around PSI, and state transitions.</text>
</comment>
<comment type="cofactor">
    <cofactor evidence="2">
        <name>heme</name>
        <dbReference type="ChEBI" id="CHEBI:30413"/>
    </cofactor>
    <text evidence="2">Binds 1 heme group covalently.</text>
</comment>
<comment type="subunit">
    <text evidence="1">The 4 large subunits of the cytochrome b6-f complex are cytochrome b6, subunit IV (17 kDa polypeptide, petD), cytochrome f and the Rieske protein, while the 4 small subunits are PetG, PetL, PetM and PetN. The complex functions as a dimer (By similarity).</text>
</comment>
<comment type="subcellular location">
    <subcellularLocation>
        <location evidence="2">Plastid</location>
        <location evidence="2">Chloroplast thylakoid membrane</location>
        <topology evidence="2">Single-pass membrane protein</topology>
    </subcellularLocation>
</comment>
<comment type="similarity">
    <text evidence="2">Belongs to the cytochrome f family.</text>
</comment>
<organism>
    <name type="scientific">Calycanthus floridus var. glaucus</name>
    <name type="common">Eastern sweetshrub</name>
    <name type="synonym">Calycanthus fertilis var. ferax</name>
    <dbReference type="NCBI Taxonomy" id="212734"/>
    <lineage>
        <taxon>Eukaryota</taxon>
        <taxon>Viridiplantae</taxon>
        <taxon>Streptophyta</taxon>
        <taxon>Embryophyta</taxon>
        <taxon>Tracheophyta</taxon>
        <taxon>Spermatophyta</taxon>
        <taxon>Magnoliopsida</taxon>
        <taxon>Magnoliidae</taxon>
        <taxon>Laurales</taxon>
        <taxon>Calycanthaceae</taxon>
        <taxon>Calycanthus</taxon>
    </lineage>
</organism>
<protein>
    <recommendedName>
        <fullName evidence="2">Cytochrome f</fullName>
    </recommendedName>
</protein>
<reference key="1">
    <citation type="journal article" date="2003" name="Plant Syst. Evol.">
        <title>The chloroplast genome of the 'basal' angiosperm Calycanthus fertilis -- structural and phylogenetic analyses.</title>
        <authorList>
            <person name="Goremykin V."/>
            <person name="Hirsch-Ernst K.I."/>
            <person name="Woelfl S."/>
            <person name="Hellwig F.H."/>
        </authorList>
    </citation>
    <scope>NUCLEOTIDE SEQUENCE [LARGE SCALE GENOMIC DNA]</scope>
</reference>
<evidence type="ECO:0000250" key="1"/>
<evidence type="ECO:0000255" key="2">
    <source>
        <dbReference type="HAMAP-Rule" id="MF_00610"/>
    </source>
</evidence>
<keyword id="KW-0150">Chloroplast</keyword>
<keyword id="KW-0249">Electron transport</keyword>
<keyword id="KW-0349">Heme</keyword>
<keyword id="KW-0408">Iron</keyword>
<keyword id="KW-0472">Membrane</keyword>
<keyword id="KW-0479">Metal-binding</keyword>
<keyword id="KW-0602">Photosynthesis</keyword>
<keyword id="KW-0934">Plastid</keyword>
<keyword id="KW-0732">Signal</keyword>
<keyword id="KW-0793">Thylakoid</keyword>
<keyword id="KW-0812">Transmembrane</keyword>
<keyword id="KW-1133">Transmembrane helix</keyword>
<keyword id="KW-0813">Transport</keyword>
<sequence length="320" mass="35304">MQNRNTFSWVKEEMTRFISVSIMIYVITRTSISNAYPIFAQQGYENPREATGRIVCANCHLANKPVDIEVPQAVLPDTVFEAVVRIPYDMQLKQVLANGKKGALNVGAVLILPEGFELAPPDRISPELKEKMGNLSFQSYRPNKRNILVVGPVPGQKYSEIVFPILSPDPATKKDVHFLKYPIYVGGNRGRGQIYPDGSKSNNTVYNATAAGIVSRIVRKEKGGYEISIADASDGRQVVDIIPPGPELLVSEGESIKLDQPLTSNPNVGGFGQGDAEIVLQDPLRVQGLLFFLASVILAQIFLVLKKKQFEKVQLSEMNF</sequence>
<proteinExistence type="inferred from homology"/>